<organism>
    <name type="scientific">Staphylococcus aureus (strain NCTC 8325 / PS 47)</name>
    <dbReference type="NCBI Taxonomy" id="93061"/>
    <lineage>
        <taxon>Bacteria</taxon>
        <taxon>Bacillati</taxon>
        <taxon>Bacillota</taxon>
        <taxon>Bacilli</taxon>
        <taxon>Bacillales</taxon>
        <taxon>Staphylococcaceae</taxon>
        <taxon>Staphylococcus</taxon>
    </lineage>
</organism>
<sequence>MDYQTFEKVNKFINVEAYIFFLTQELKQQYKLSLKELLILAYFYYKNEHSISLKEIIGDILYKQSDVVKNIKSLSKKGFINKSRNEADERRIFVSVTPIQRKKIACVINELDKIIKGFNKERDYIKYQWAPKYSKEFFILFMNIMYSKDFLKYRFNLTFLDLSILYVISSRKNEILNLKDLFESIRFMYPQIVRSVNRLNNKGMLIKERSLADERIVLIKINKIQYNTIKSIFTDTSKILKPRKFFF</sequence>
<protein>
    <recommendedName>
        <fullName>HTH-type transcriptional regulator SarU</fullName>
    </recommendedName>
    <alternativeName>
        <fullName>Staphylococcal accessory regulator U</fullName>
    </alternativeName>
</protein>
<gene>
    <name type="primary">sarU</name>
    <name type="ordered locus">SAOUHSC_02800</name>
</gene>
<accession>Q2G1T7</accession>
<dbReference type="EMBL" id="CP000253">
    <property type="protein sequence ID" value="ABD31803.1"/>
    <property type="molecule type" value="Genomic_DNA"/>
</dbReference>
<dbReference type="RefSeq" id="WP_000386367.1">
    <property type="nucleotide sequence ID" value="NZ_LS483365.1"/>
</dbReference>
<dbReference type="RefSeq" id="YP_501259.1">
    <property type="nucleotide sequence ID" value="NC_007795.1"/>
</dbReference>
<dbReference type="SMR" id="Q2G1T7"/>
<dbReference type="STRING" id="93061.SAOUHSC_02800"/>
<dbReference type="PaxDb" id="1280-SAXN108_2746"/>
<dbReference type="GeneID" id="3921454"/>
<dbReference type="KEGG" id="sao:SAOUHSC_02800"/>
<dbReference type="PATRIC" id="fig|93061.5.peg.2532"/>
<dbReference type="eggNOG" id="COG1846">
    <property type="taxonomic scope" value="Bacteria"/>
</dbReference>
<dbReference type="HOGENOM" id="CLU_097164_0_0_9"/>
<dbReference type="OrthoDB" id="2404503at2"/>
<dbReference type="PRO" id="PR:Q2G1T7"/>
<dbReference type="Proteomes" id="UP000008816">
    <property type="component" value="Chromosome"/>
</dbReference>
<dbReference type="GO" id="GO:0005737">
    <property type="term" value="C:cytoplasm"/>
    <property type="evidence" value="ECO:0007669"/>
    <property type="project" value="UniProtKB-SubCell"/>
</dbReference>
<dbReference type="GO" id="GO:0003677">
    <property type="term" value="F:DNA binding"/>
    <property type="evidence" value="ECO:0007669"/>
    <property type="project" value="UniProtKB-KW"/>
</dbReference>
<dbReference type="GO" id="GO:0003700">
    <property type="term" value="F:DNA-binding transcription factor activity"/>
    <property type="evidence" value="ECO:0007669"/>
    <property type="project" value="InterPro"/>
</dbReference>
<dbReference type="GO" id="GO:0006355">
    <property type="term" value="P:regulation of DNA-templated transcription"/>
    <property type="evidence" value="ECO:0000318"/>
    <property type="project" value="GO_Central"/>
</dbReference>
<dbReference type="GO" id="GO:0006950">
    <property type="term" value="P:response to stress"/>
    <property type="evidence" value="ECO:0000318"/>
    <property type="project" value="GO_Central"/>
</dbReference>
<dbReference type="Gene3D" id="1.10.10.10">
    <property type="entry name" value="Winged helix-like DNA-binding domain superfamily/Winged helix DNA-binding domain"/>
    <property type="match status" value="2"/>
</dbReference>
<dbReference type="InterPro" id="IPR039422">
    <property type="entry name" value="MarR/SlyA-like"/>
</dbReference>
<dbReference type="InterPro" id="IPR010166">
    <property type="entry name" value="SarA/Rot_dom"/>
</dbReference>
<dbReference type="InterPro" id="IPR055166">
    <property type="entry name" value="Transc_reg_Sar_Rot_HTH"/>
</dbReference>
<dbReference type="InterPro" id="IPR036388">
    <property type="entry name" value="WH-like_DNA-bd_sf"/>
</dbReference>
<dbReference type="InterPro" id="IPR036390">
    <property type="entry name" value="WH_DNA-bd_sf"/>
</dbReference>
<dbReference type="NCBIfam" id="TIGR01889">
    <property type="entry name" value="Staph_reg_Sar"/>
    <property type="match status" value="2"/>
</dbReference>
<dbReference type="PANTHER" id="PTHR33164:SF5">
    <property type="entry name" value="ORGANIC HYDROPEROXIDE RESISTANCE TRANSCRIPTIONAL REGULATOR"/>
    <property type="match status" value="1"/>
</dbReference>
<dbReference type="PANTHER" id="PTHR33164">
    <property type="entry name" value="TRANSCRIPTIONAL REGULATOR, MARR FAMILY"/>
    <property type="match status" value="1"/>
</dbReference>
<dbReference type="Pfam" id="PF22381">
    <property type="entry name" value="Staph_reg_Sar_Rot"/>
    <property type="match status" value="2"/>
</dbReference>
<dbReference type="SUPFAM" id="SSF46785">
    <property type="entry name" value="Winged helix' DNA-binding domain"/>
    <property type="match status" value="2"/>
</dbReference>
<evidence type="ECO:0000255" key="1"/>
<evidence type="ECO:0000269" key="2">
    <source>
    </source>
</evidence>
<evidence type="ECO:0000305" key="3"/>
<keyword id="KW-0010">Activator</keyword>
<keyword id="KW-0963">Cytoplasm</keyword>
<keyword id="KW-0238">DNA-binding</keyword>
<keyword id="KW-1185">Reference proteome</keyword>
<keyword id="KW-0677">Repeat</keyword>
<keyword id="KW-0804">Transcription</keyword>
<keyword id="KW-0805">Transcription regulation</keyword>
<keyword id="KW-0843">Virulence</keyword>
<feature type="chain" id="PRO_0000249331" description="HTH-type transcriptional regulator SarU">
    <location>
        <begin position="1"/>
        <end position="247"/>
    </location>
</feature>
<feature type="DNA-binding region" description="H-T-H motif" evidence="1">
    <location>
        <begin position="53"/>
        <end position="76"/>
    </location>
</feature>
<feature type="DNA-binding region" description="H-T-H motif" evidence="1">
    <location>
        <begin position="178"/>
        <end position="201"/>
    </location>
</feature>
<name>SARU_STAA8</name>
<reference key="1">
    <citation type="book" date="2006" name="Gram positive pathogens, 2nd edition">
        <title>The Staphylococcus aureus NCTC 8325 genome.</title>
        <editorList>
            <person name="Fischetti V."/>
            <person name="Novick R."/>
            <person name="Ferretti J."/>
            <person name="Portnoy D."/>
            <person name="Rood J."/>
        </editorList>
        <authorList>
            <person name="Gillaspy A.F."/>
            <person name="Worrell V."/>
            <person name="Orvis J."/>
            <person name="Roe B.A."/>
            <person name="Dyer D.W."/>
            <person name="Iandolo J.J."/>
        </authorList>
    </citation>
    <scope>NUCLEOTIDE SEQUENCE [LARGE SCALE GENOMIC DNA]</scope>
    <source>
        <strain>NCTC 8325 / PS 47</strain>
    </source>
</reference>
<reference key="2">
    <citation type="journal article" date="2003" name="Infect. Immun.">
        <title>sarU, a sarA homolog, is repressed by SarT and regulates virulence genes in Staphylococcus aureus.</title>
        <authorList>
            <person name="Manna A.C."/>
            <person name="Cheung A.L."/>
        </authorList>
    </citation>
    <scope>FUNCTION</scope>
    <scope>REGULATION BY SART</scope>
</reference>
<comment type="function">
    <text evidence="2">Positive regulator of RNAII and RNAIII in a cell density-dependent manner. It can contribute to the expression of virulence genes controlled by agr. May also regulate target genes via an agr-independent pathway.</text>
</comment>
<comment type="subcellular location">
    <subcellularLocation>
        <location evidence="3">Cytoplasm</location>
    </subcellularLocation>
</comment>
<comment type="induction">
    <text>Maximally expressed during post-exponential growth phase. Repressed by SarT.</text>
</comment>
<comment type="similarity">
    <text evidence="3">Belongs to the SarA family.</text>
</comment>
<proteinExistence type="evidence at transcript level"/>